<organism>
    <name type="scientific">Oryza sativa subsp. japonica</name>
    <name type="common">Rice</name>
    <dbReference type="NCBI Taxonomy" id="39947"/>
    <lineage>
        <taxon>Eukaryota</taxon>
        <taxon>Viridiplantae</taxon>
        <taxon>Streptophyta</taxon>
        <taxon>Embryophyta</taxon>
        <taxon>Tracheophyta</taxon>
        <taxon>Spermatophyta</taxon>
        <taxon>Magnoliopsida</taxon>
        <taxon>Liliopsida</taxon>
        <taxon>Poales</taxon>
        <taxon>Poaceae</taxon>
        <taxon>BOP clade</taxon>
        <taxon>Oryzoideae</taxon>
        <taxon>Oryzeae</taxon>
        <taxon>Oryzinae</taxon>
        <taxon>Oryza</taxon>
        <taxon>Oryza sativa</taxon>
    </lineage>
</organism>
<accession>Q10SM2</accession>
<accession>A0A0P0VS86</accession>
<evidence type="ECO:0000250" key="1">
    <source>
        <dbReference type="UniProtKB" id="P9WI99"/>
    </source>
</evidence>
<evidence type="ECO:0000250" key="2">
    <source>
        <dbReference type="UniProtKB" id="Q9HA64"/>
    </source>
</evidence>
<evidence type="ECO:0000250" key="3">
    <source>
        <dbReference type="UniProtKB" id="Q9LEW8"/>
    </source>
</evidence>
<evidence type="ECO:0000255" key="4"/>
<evidence type="ECO:0000305" key="5"/>
<keyword id="KW-0067">ATP-binding</keyword>
<keyword id="KW-0150">Chloroplast</keyword>
<keyword id="KW-0418">Kinase</keyword>
<keyword id="KW-0547">Nucleotide-binding</keyword>
<keyword id="KW-0934">Plastid</keyword>
<keyword id="KW-1185">Reference proteome</keyword>
<keyword id="KW-0808">Transferase</keyword>
<keyword id="KW-0809">Transit peptide</keyword>
<comment type="function">
    <text evidence="3">Initiates a process leading to the deglycation of proteins. Phosphorylates low-molecular-mass and protein-bound erythrulosamines and ribulosamines, but not fructosamines or psicosamines, on the third carbon of the sugar moiety. Protein-bound erythrulosamine 3-phosphates and ribulosamine 3-phosphates are unstable and decompose under physiological conditions.</text>
</comment>
<comment type="catalytic activity">
    <reaction evidence="3">
        <text>N(6)-D-ribulosyl-L-lysyl-[protein] + ATP = N(6)-(3-O-phospho-D-ribulosyl)-L-lysyl-[protein] + ADP + H(+)</text>
        <dbReference type="Rhea" id="RHEA:48432"/>
        <dbReference type="Rhea" id="RHEA-COMP:12103"/>
        <dbReference type="Rhea" id="RHEA-COMP:12104"/>
        <dbReference type="ChEBI" id="CHEBI:15378"/>
        <dbReference type="ChEBI" id="CHEBI:30616"/>
        <dbReference type="ChEBI" id="CHEBI:90418"/>
        <dbReference type="ChEBI" id="CHEBI:90420"/>
        <dbReference type="ChEBI" id="CHEBI:456216"/>
        <dbReference type="EC" id="2.7.1.172"/>
    </reaction>
    <physiologicalReaction direction="left-to-right" evidence="3">
        <dbReference type="Rhea" id="RHEA:48433"/>
    </physiologicalReaction>
</comment>
<comment type="catalytic activity">
    <reaction evidence="3">
        <text>N(6)-(D-erythrulosyl)-L-lysyl-[protein] + ATP = N(6)-(3-O-phospho-D-erythrulosyl)-L-lysyl-[protein] + ADP + H(+)</text>
        <dbReference type="Rhea" id="RHEA:61396"/>
        <dbReference type="Rhea" id="RHEA-COMP:15794"/>
        <dbReference type="Rhea" id="RHEA-COMP:15799"/>
        <dbReference type="ChEBI" id="CHEBI:15378"/>
        <dbReference type="ChEBI" id="CHEBI:30616"/>
        <dbReference type="ChEBI" id="CHEBI:144587"/>
        <dbReference type="ChEBI" id="CHEBI:144624"/>
        <dbReference type="ChEBI" id="CHEBI:456216"/>
    </reaction>
    <physiologicalReaction direction="left-to-right" evidence="3">
        <dbReference type="Rhea" id="RHEA:61397"/>
    </physiologicalReaction>
</comment>
<comment type="subcellular location">
    <subcellularLocation>
        <location evidence="5">Plastid</location>
        <location evidence="5">Chloroplast</location>
    </subcellularLocation>
</comment>
<comment type="similarity">
    <text evidence="5">Belongs to the fructosamine kinase family.</text>
</comment>
<sequence>MANVALLSAASPSTSSAAPRLRHVARRRPSRRSACPRSAASRLSIMAALGEDPIRQWILTEGKATKITGVSSIGGGCINSAQCYKTDASSFFVKTNGRIGPSMFEGEALGLKAMYDTNSIRVPLPYKVGSLPTGGSFIIMEFIEFGCSRGDQSALGRKLAEMHKAAKSDKGYGFYVDNTIGSTPQINTWTADWIEFYSKHRLGFQLELITQRFGDSAIYDKGQRLIENMHPLFEGAVMEPCLLHGDLWSGNISSDTNGEPVILDPACYYGHNEAEFGMSWCAGFGGEFYSSYFEVMPKQPGFEKRRDLYLLYHYLNHYNLFGSGYRSSAMSIIDDYLRMLKA</sequence>
<dbReference type="EC" id="2.7.1.172" evidence="3"/>
<dbReference type="EMBL" id="DP000009">
    <property type="protein sequence ID" value="ABF93664.1"/>
    <property type="molecule type" value="Genomic_DNA"/>
</dbReference>
<dbReference type="EMBL" id="AP008209">
    <property type="protein sequence ID" value="BAF10682.1"/>
    <property type="molecule type" value="Genomic_DNA"/>
</dbReference>
<dbReference type="EMBL" id="AP014959">
    <property type="protein sequence ID" value="BAS81991.1"/>
    <property type="molecule type" value="Genomic_DNA"/>
</dbReference>
<dbReference type="EMBL" id="CM000140">
    <property type="protein sequence ID" value="EAZ25366.1"/>
    <property type="molecule type" value="Genomic_DNA"/>
</dbReference>
<dbReference type="EMBL" id="AK066948">
    <property type="protein sequence ID" value="BAG90193.1"/>
    <property type="molecule type" value="mRNA"/>
</dbReference>
<dbReference type="RefSeq" id="XP_015628896.1">
    <property type="nucleotide sequence ID" value="XM_015773410.1"/>
</dbReference>
<dbReference type="SMR" id="Q10SM2"/>
<dbReference type="FunCoup" id="Q10SM2">
    <property type="interactions" value="2299"/>
</dbReference>
<dbReference type="STRING" id="39947.Q10SM2"/>
<dbReference type="PaxDb" id="39947-Q10SM2"/>
<dbReference type="EnsemblPlants" id="Os03t0117800-01">
    <property type="protein sequence ID" value="Os03t0117800-01"/>
    <property type="gene ID" value="Os03g0117800"/>
</dbReference>
<dbReference type="Gramene" id="Os03t0117800-01">
    <property type="protein sequence ID" value="Os03t0117800-01"/>
    <property type="gene ID" value="Os03g0117800"/>
</dbReference>
<dbReference type="KEGG" id="dosa:Os03g0117800"/>
<dbReference type="eggNOG" id="KOG3021">
    <property type="taxonomic scope" value="Eukaryota"/>
</dbReference>
<dbReference type="HOGENOM" id="CLU_036517_0_1_1"/>
<dbReference type="InParanoid" id="Q10SM2"/>
<dbReference type="OMA" id="RECDIAM"/>
<dbReference type="OrthoDB" id="5772781at2759"/>
<dbReference type="Proteomes" id="UP000000763">
    <property type="component" value="Chromosome 3"/>
</dbReference>
<dbReference type="Proteomes" id="UP000007752">
    <property type="component" value="Chromosome 3"/>
</dbReference>
<dbReference type="Proteomes" id="UP000059680">
    <property type="component" value="Chromosome 3"/>
</dbReference>
<dbReference type="GO" id="GO:0009507">
    <property type="term" value="C:chloroplast"/>
    <property type="evidence" value="ECO:0007669"/>
    <property type="project" value="UniProtKB-SubCell"/>
</dbReference>
<dbReference type="GO" id="GO:0005524">
    <property type="term" value="F:ATP binding"/>
    <property type="evidence" value="ECO:0007669"/>
    <property type="project" value="UniProtKB-KW"/>
</dbReference>
<dbReference type="GO" id="GO:0016301">
    <property type="term" value="F:kinase activity"/>
    <property type="evidence" value="ECO:0000318"/>
    <property type="project" value="GO_Central"/>
</dbReference>
<dbReference type="GO" id="GO:0102193">
    <property type="term" value="F:protein-ribulosamine 3-kinase activity"/>
    <property type="evidence" value="ECO:0007669"/>
    <property type="project" value="UniProtKB-EC"/>
</dbReference>
<dbReference type="FunFam" id="3.30.200.20:FF:000264">
    <property type="entry name" value="Protein-ribulosamine 3-kinase, chloroplastic"/>
    <property type="match status" value="1"/>
</dbReference>
<dbReference type="FunFam" id="3.90.1200.10:FF:000006">
    <property type="entry name" value="Protein-ribulosamine 3-kinase, chloroplastic"/>
    <property type="match status" value="1"/>
</dbReference>
<dbReference type="Gene3D" id="3.90.1200.10">
    <property type="match status" value="1"/>
</dbReference>
<dbReference type="Gene3D" id="3.30.200.20">
    <property type="entry name" value="Phosphorylase Kinase, domain 1"/>
    <property type="match status" value="1"/>
</dbReference>
<dbReference type="InterPro" id="IPR016477">
    <property type="entry name" value="Fructo-/Ketosamine-3-kinase"/>
</dbReference>
<dbReference type="InterPro" id="IPR011009">
    <property type="entry name" value="Kinase-like_dom_sf"/>
</dbReference>
<dbReference type="PANTHER" id="PTHR12149">
    <property type="entry name" value="FRUCTOSAMINE 3 KINASE-RELATED PROTEIN"/>
    <property type="match status" value="1"/>
</dbReference>
<dbReference type="PANTHER" id="PTHR12149:SF8">
    <property type="entry name" value="PROTEIN-RIBULOSAMINE 3-KINASE"/>
    <property type="match status" value="1"/>
</dbReference>
<dbReference type="Pfam" id="PF03881">
    <property type="entry name" value="Fructosamin_kin"/>
    <property type="match status" value="1"/>
</dbReference>
<dbReference type="PIRSF" id="PIRSF006221">
    <property type="entry name" value="Ketosamine-3-kinase"/>
    <property type="match status" value="1"/>
</dbReference>
<dbReference type="SUPFAM" id="SSF56112">
    <property type="entry name" value="Protein kinase-like (PK-like)"/>
    <property type="match status" value="1"/>
</dbReference>
<name>FN3KR_ORYSJ</name>
<feature type="transit peptide" description="Chloroplast" evidence="4">
    <location>
        <begin position="1"/>
        <end position="46"/>
    </location>
</feature>
<feature type="chain" id="PRO_0000413959" description="Protein-ribulosamine 3-kinase, chloroplastic">
    <location>
        <begin position="47"/>
        <end position="342"/>
    </location>
</feature>
<feature type="active site" description="Proton acceptor" evidence="1">
    <location>
        <position position="246"/>
    </location>
</feature>
<feature type="binding site" evidence="2">
    <location>
        <begin position="141"/>
        <end position="143"/>
    </location>
    <ligand>
        <name>ATP</name>
        <dbReference type="ChEBI" id="CHEBI:30616"/>
    </ligand>
</feature>
<reference key="1">
    <citation type="journal article" date="2005" name="Genome Res.">
        <title>Sequence, annotation, and analysis of synteny between rice chromosome 3 and diverged grass species.</title>
        <authorList>
            <consortium name="The rice chromosome 3 sequencing consortium"/>
            <person name="Buell C.R."/>
            <person name="Yuan Q."/>
            <person name="Ouyang S."/>
            <person name="Liu J."/>
            <person name="Zhu W."/>
            <person name="Wang A."/>
            <person name="Maiti R."/>
            <person name="Haas B."/>
            <person name="Wortman J."/>
            <person name="Pertea M."/>
            <person name="Jones K.M."/>
            <person name="Kim M."/>
            <person name="Overton L."/>
            <person name="Tsitrin T."/>
            <person name="Fadrosh D."/>
            <person name="Bera J."/>
            <person name="Weaver B."/>
            <person name="Jin S."/>
            <person name="Johri S."/>
            <person name="Reardon M."/>
            <person name="Webb K."/>
            <person name="Hill J."/>
            <person name="Moffat K."/>
            <person name="Tallon L."/>
            <person name="Van Aken S."/>
            <person name="Lewis M."/>
            <person name="Utterback T."/>
            <person name="Feldblyum T."/>
            <person name="Zismann V."/>
            <person name="Iobst S."/>
            <person name="Hsiao J."/>
            <person name="de Vazeille A.R."/>
            <person name="Salzberg S.L."/>
            <person name="White O."/>
            <person name="Fraser C.M."/>
            <person name="Yu Y."/>
            <person name="Kim H."/>
            <person name="Rambo T."/>
            <person name="Currie J."/>
            <person name="Collura K."/>
            <person name="Kernodle-Thompson S."/>
            <person name="Wei F."/>
            <person name="Kudrna K."/>
            <person name="Ammiraju J.S.S."/>
            <person name="Luo M."/>
            <person name="Goicoechea J.L."/>
            <person name="Wing R.A."/>
            <person name="Henry D."/>
            <person name="Oates R."/>
            <person name="Palmer M."/>
            <person name="Pries G."/>
            <person name="Saski C."/>
            <person name="Simmons J."/>
            <person name="Soderlund C."/>
            <person name="Nelson W."/>
            <person name="de la Bastide M."/>
            <person name="Spiegel L."/>
            <person name="Nascimento L."/>
            <person name="Huang E."/>
            <person name="Preston R."/>
            <person name="Zutavern T."/>
            <person name="Palmer L."/>
            <person name="O'Shaughnessy A."/>
            <person name="Dike S."/>
            <person name="McCombie W.R."/>
            <person name="Minx P."/>
            <person name="Cordum H."/>
            <person name="Wilson R."/>
            <person name="Jin W."/>
            <person name="Lee H.R."/>
            <person name="Jiang J."/>
            <person name="Jackson S."/>
        </authorList>
    </citation>
    <scope>NUCLEOTIDE SEQUENCE [LARGE SCALE GENOMIC DNA]</scope>
    <source>
        <strain>cv. Nipponbare</strain>
    </source>
</reference>
<reference key="2">
    <citation type="journal article" date="2005" name="Nature">
        <title>The map-based sequence of the rice genome.</title>
        <authorList>
            <consortium name="International rice genome sequencing project (IRGSP)"/>
        </authorList>
    </citation>
    <scope>NUCLEOTIDE SEQUENCE [LARGE SCALE GENOMIC DNA]</scope>
    <source>
        <strain>cv. Nipponbare</strain>
    </source>
</reference>
<reference key="3">
    <citation type="journal article" date="2008" name="Nucleic Acids Res.">
        <title>The rice annotation project database (RAP-DB): 2008 update.</title>
        <authorList>
            <consortium name="The rice annotation project (RAP)"/>
        </authorList>
    </citation>
    <scope>GENOME REANNOTATION</scope>
    <source>
        <strain>cv. Nipponbare</strain>
    </source>
</reference>
<reference key="4">
    <citation type="journal article" date="2013" name="Rice">
        <title>Improvement of the Oryza sativa Nipponbare reference genome using next generation sequence and optical map data.</title>
        <authorList>
            <person name="Kawahara Y."/>
            <person name="de la Bastide M."/>
            <person name="Hamilton J.P."/>
            <person name="Kanamori H."/>
            <person name="McCombie W.R."/>
            <person name="Ouyang S."/>
            <person name="Schwartz D.C."/>
            <person name="Tanaka T."/>
            <person name="Wu J."/>
            <person name="Zhou S."/>
            <person name="Childs K.L."/>
            <person name="Davidson R.M."/>
            <person name="Lin H."/>
            <person name="Quesada-Ocampo L."/>
            <person name="Vaillancourt B."/>
            <person name="Sakai H."/>
            <person name="Lee S.S."/>
            <person name="Kim J."/>
            <person name="Numa H."/>
            <person name="Itoh T."/>
            <person name="Buell C.R."/>
            <person name="Matsumoto T."/>
        </authorList>
    </citation>
    <scope>GENOME REANNOTATION</scope>
    <source>
        <strain>cv. Nipponbare</strain>
    </source>
</reference>
<reference key="5">
    <citation type="journal article" date="2005" name="PLoS Biol.">
        <title>The genomes of Oryza sativa: a history of duplications.</title>
        <authorList>
            <person name="Yu J."/>
            <person name="Wang J."/>
            <person name="Lin W."/>
            <person name="Li S."/>
            <person name="Li H."/>
            <person name="Zhou J."/>
            <person name="Ni P."/>
            <person name="Dong W."/>
            <person name="Hu S."/>
            <person name="Zeng C."/>
            <person name="Zhang J."/>
            <person name="Zhang Y."/>
            <person name="Li R."/>
            <person name="Xu Z."/>
            <person name="Li S."/>
            <person name="Li X."/>
            <person name="Zheng H."/>
            <person name="Cong L."/>
            <person name="Lin L."/>
            <person name="Yin J."/>
            <person name="Geng J."/>
            <person name="Li G."/>
            <person name="Shi J."/>
            <person name="Liu J."/>
            <person name="Lv H."/>
            <person name="Li J."/>
            <person name="Wang J."/>
            <person name="Deng Y."/>
            <person name="Ran L."/>
            <person name="Shi X."/>
            <person name="Wang X."/>
            <person name="Wu Q."/>
            <person name="Li C."/>
            <person name="Ren X."/>
            <person name="Wang J."/>
            <person name="Wang X."/>
            <person name="Li D."/>
            <person name="Liu D."/>
            <person name="Zhang X."/>
            <person name="Ji Z."/>
            <person name="Zhao W."/>
            <person name="Sun Y."/>
            <person name="Zhang Z."/>
            <person name="Bao J."/>
            <person name="Han Y."/>
            <person name="Dong L."/>
            <person name="Ji J."/>
            <person name="Chen P."/>
            <person name="Wu S."/>
            <person name="Liu J."/>
            <person name="Xiao Y."/>
            <person name="Bu D."/>
            <person name="Tan J."/>
            <person name="Yang L."/>
            <person name="Ye C."/>
            <person name="Zhang J."/>
            <person name="Xu J."/>
            <person name="Zhou Y."/>
            <person name="Yu Y."/>
            <person name="Zhang B."/>
            <person name="Zhuang S."/>
            <person name="Wei H."/>
            <person name="Liu B."/>
            <person name="Lei M."/>
            <person name="Yu H."/>
            <person name="Li Y."/>
            <person name="Xu H."/>
            <person name="Wei S."/>
            <person name="He X."/>
            <person name="Fang L."/>
            <person name="Zhang Z."/>
            <person name="Zhang Y."/>
            <person name="Huang X."/>
            <person name="Su Z."/>
            <person name="Tong W."/>
            <person name="Li J."/>
            <person name="Tong Z."/>
            <person name="Li S."/>
            <person name="Ye J."/>
            <person name="Wang L."/>
            <person name="Fang L."/>
            <person name="Lei T."/>
            <person name="Chen C.-S."/>
            <person name="Chen H.-C."/>
            <person name="Xu Z."/>
            <person name="Li H."/>
            <person name="Huang H."/>
            <person name="Zhang F."/>
            <person name="Xu H."/>
            <person name="Li N."/>
            <person name="Zhao C."/>
            <person name="Li S."/>
            <person name="Dong L."/>
            <person name="Huang Y."/>
            <person name="Li L."/>
            <person name="Xi Y."/>
            <person name="Qi Q."/>
            <person name="Li W."/>
            <person name="Zhang B."/>
            <person name="Hu W."/>
            <person name="Zhang Y."/>
            <person name="Tian X."/>
            <person name="Jiao Y."/>
            <person name="Liang X."/>
            <person name="Jin J."/>
            <person name="Gao L."/>
            <person name="Zheng W."/>
            <person name="Hao B."/>
            <person name="Liu S.-M."/>
            <person name="Wang W."/>
            <person name="Yuan L."/>
            <person name="Cao M."/>
            <person name="McDermott J."/>
            <person name="Samudrala R."/>
            <person name="Wang J."/>
            <person name="Wong G.K.-S."/>
            <person name="Yang H."/>
        </authorList>
    </citation>
    <scope>NUCLEOTIDE SEQUENCE [LARGE SCALE GENOMIC DNA]</scope>
    <source>
        <strain>cv. Nipponbare</strain>
    </source>
</reference>
<reference key="6">
    <citation type="journal article" date="2003" name="Science">
        <title>Collection, mapping, and annotation of over 28,000 cDNA clones from japonica rice.</title>
        <authorList>
            <consortium name="The rice full-length cDNA consortium"/>
        </authorList>
    </citation>
    <scope>NUCLEOTIDE SEQUENCE [LARGE SCALE MRNA]</scope>
    <source>
        <strain>cv. Nipponbare</strain>
    </source>
</reference>
<reference key="7">
    <citation type="journal article" date="2005" name="Biochem. J.">
        <title>Plant ribulosamine/erythrulosamine 3-kinase, a putative protein-repair enzyme.</title>
        <authorList>
            <person name="Fortpied J."/>
            <person name="Gemayel R."/>
            <person name="Stroobant V."/>
            <person name="van Schaftingen E."/>
        </authorList>
    </citation>
    <scope>IDENTIFICATION</scope>
</reference>
<proteinExistence type="evidence at transcript level"/>
<protein>
    <recommendedName>
        <fullName evidence="5">Protein-ribulosamine 3-kinase, chloroplastic</fullName>
        <ecNumber evidence="3">2.7.1.172</ecNumber>
    </recommendedName>
    <alternativeName>
        <fullName evidence="3">Fructosamine 3-kinase-related protein</fullName>
    </alternativeName>
</protein>
<gene>
    <name type="ordered locus">Os03g0117800</name>
    <name type="ordered locus">LOC_Os03g02640</name>
    <name type="ORF">OsJ_09183</name>
</gene>